<reference key="1">
    <citation type="submission" date="1996-03" db="EMBL/GenBank/DDBJ databases">
        <title>Isolation and sequence of the group 1 outer membrane protein of Brucella abortus.</title>
        <authorList>
            <person name="Bearden S.W."/>
            <person name="Ficht T.A."/>
        </authorList>
    </citation>
    <scope>NUCLEOTIDE SEQUENCE [GENOMIC DNA]</scope>
</reference>
<reference key="2">
    <citation type="journal article" date="2005" name="Infect. Immun.">
        <title>Whole-genome analyses of speciation events in pathogenic Brucellae.</title>
        <authorList>
            <person name="Chain P.S."/>
            <person name="Comerci D.J."/>
            <person name="Tolmasky M.E."/>
            <person name="Larimer F.W."/>
            <person name="Malfatti S.A."/>
            <person name="Vergez L.M."/>
            <person name="Aguero F."/>
            <person name="Land M.L."/>
            <person name="Ugalde R.A."/>
            <person name="Garcia E."/>
        </authorList>
    </citation>
    <scope>NUCLEOTIDE SEQUENCE [LARGE SCALE GENOMIC DNA]</scope>
    <source>
        <strain>2308</strain>
    </source>
</reference>
<comment type="function">
    <text evidence="1">Catalyzes the N-acylation of UDP-3-O-acylglucosamine using 3-hydroxyacyl-ACP as the acyl donor. Is involved in the biosynthesis of lipid A, a phosphorylated glycolipid that anchors the lipopolysaccharide to the outer membrane of the cell.</text>
</comment>
<comment type="catalytic activity">
    <reaction evidence="1">
        <text>a UDP-3-O-[(3R)-3-hydroxyacyl]-alpha-D-glucosamine + a (3R)-hydroxyacyl-[ACP] = a UDP-2-N,3-O-bis[(3R)-3-hydroxyacyl]-alpha-D-glucosamine + holo-[ACP] + H(+)</text>
        <dbReference type="Rhea" id="RHEA:53836"/>
        <dbReference type="Rhea" id="RHEA-COMP:9685"/>
        <dbReference type="Rhea" id="RHEA-COMP:9945"/>
        <dbReference type="ChEBI" id="CHEBI:15378"/>
        <dbReference type="ChEBI" id="CHEBI:64479"/>
        <dbReference type="ChEBI" id="CHEBI:78827"/>
        <dbReference type="ChEBI" id="CHEBI:137740"/>
        <dbReference type="ChEBI" id="CHEBI:137748"/>
        <dbReference type="EC" id="2.3.1.191"/>
    </reaction>
</comment>
<comment type="pathway">
    <text evidence="1">Bacterial outer membrane biogenesis; LPS lipid A biosynthesis.</text>
</comment>
<comment type="subunit">
    <text evidence="1">Homotrimer.</text>
</comment>
<comment type="similarity">
    <text evidence="1">Belongs to the transferase hexapeptide repeat family. LpxD subfamily.</text>
</comment>
<evidence type="ECO:0000255" key="1">
    <source>
        <dbReference type="HAMAP-Rule" id="MF_00523"/>
    </source>
</evidence>
<protein>
    <recommendedName>
        <fullName evidence="1">UDP-3-O-acylglucosamine N-acyltransferase</fullName>
        <ecNumber evidence="1">2.3.1.191</ecNumber>
    </recommendedName>
</protein>
<name>LPXD_BRUA2</name>
<feature type="chain" id="PRO_0000059653" description="UDP-3-O-acylglucosamine N-acyltransferase">
    <location>
        <begin position="1"/>
        <end position="351"/>
    </location>
</feature>
<feature type="active site" description="Proton acceptor" evidence="1">
    <location>
        <position position="257"/>
    </location>
</feature>
<dbReference type="EC" id="2.3.1.191" evidence="1"/>
<dbReference type="EMBL" id="U51683">
    <property type="protein sequence ID" value="AAA96789.1"/>
    <property type="molecule type" value="Genomic_DNA"/>
</dbReference>
<dbReference type="EMBL" id="AM040264">
    <property type="protein sequence ID" value="CAJ11131.1"/>
    <property type="molecule type" value="Genomic_DNA"/>
</dbReference>
<dbReference type="RefSeq" id="WP_002964281.1">
    <property type="nucleotide sequence ID" value="NZ_KN046823.1"/>
</dbReference>
<dbReference type="SMR" id="Q2YRQ3"/>
<dbReference type="STRING" id="359391.BAB1_1175"/>
<dbReference type="GeneID" id="97533596"/>
<dbReference type="KEGG" id="bmf:BAB1_1175"/>
<dbReference type="PATRIC" id="fig|359391.11.peg.74"/>
<dbReference type="HOGENOM" id="CLU_049865_0_2_5"/>
<dbReference type="PhylomeDB" id="Q2YRQ3"/>
<dbReference type="BioCyc" id="MetaCyc:BAB_RS21550-MONOMER"/>
<dbReference type="UniPathway" id="UPA00973"/>
<dbReference type="Proteomes" id="UP000002719">
    <property type="component" value="Chromosome I"/>
</dbReference>
<dbReference type="GO" id="GO:0016020">
    <property type="term" value="C:membrane"/>
    <property type="evidence" value="ECO:0007669"/>
    <property type="project" value="GOC"/>
</dbReference>
<dbReference type="GO" id="GO:0016410">
    <property type="term" value="F:N-acyltransferase activity"/>
    <property type="evidence" value="ECO:0007669"/>
    <property type="project" value="InterPro"/>
</dbReference>
<dbReference type="GO" id="GO:0009245">
    <property type="term" value="P:lipid A biosynthetic process"/>
    <property type="evidence" value="ECO:0007669"/>
    <property type="project" value="UniProtKB-UniRule"/>
</dbReference>
<dbReference type="CDD" id="cd03352">
    <property type="entry name" value="LbH_LpxD"/>
    <property type="match status" value="1"/>
</dbReference>
<dbReference type="Gene3D" id="2.160.10.10">
    <property type="entry name" value="Hexapeptide repeat proteins"/>
    <property type="match status" value="1"/>
</dbReference>
<dbReference type="Gene3D" id="3.40.1390.10">
    <property type="entry name" value="MurE/MurF, N-terminal domain"/>
    <property type="match status" value="1"/>
</dbReference>
<dbReference type="HAMAP" id="MF_00523">
    <property type="entry name" value="LpxD"/>
    <property type="match status" value="1"/>
</dbReference>
<dbReference type="InterPro" id="IPR001451">
    <property type="entry name" value="Hexapep"/>
</dbReference>
<dbReference type="InterPro" id="IPR018357">
    <property type="entry name" value="Hexapep_transf_CS"/>
</dbReference>
<dbReference type="InterPro" id="IPR007691">
    <property type="entry name" value="LpxD"/>
</dbReference>
<dbReference type="InterPro" id="IPR011004">
    <property type="entry name" value="Trimer_LpxA-like_sf"/>
</dbReference>
<dbReference type="InterPro" id="IPR020573">
    <property type="entry name" value="UDP_GlcNAc_AcTrfase_non-rep"/>
</dbReference>
<dbReference type="NCBIfam" id="TIGR01853">
    <property type="entry name" value="lipid_A_lpxD"/>
    <property type="match status" value="1"/>
</dbReference>
<dbReference type="NCBIfam" id="NF002060">
    <property type="entry name" value="PRK00892.1"/>
    <property type="match status" value="1"/>
</dbReference>
<dbReference type="PANTHER" id="PTHR43378">
    <property type="entry name" value="UDP-3-O-ACYLGLUCOSAMINE N-ACYLTRANSFERASE"/>
    <property type="match status" value="1"/>
</dbReference>
<dbReference type="PANTHER" id="PTHR43378:SF2">
    <property type="entry name" value="UDP-3-O-ACYLGLUCOSAMINE N-ACYLTRANSFERASE 1, MITOCHONDRIAL-RELATED"/>
    <property type="match status" value="1"/>
</dbReference>
<dbReference type="Pfam" id="PF00132">
    <property type="entry name" value="Hexapep"/>
    <property type="match status" value="2"/>
</dbReference>
<dbReference type="Pfam" id="PF04613">
    <property type="entry name" value="LpxD"/>
    <property type="match status" value="1"/>
</dbReference>
<dbReference type="SUPFAM" id="SSF51161">
    <property type="entry name" value="Trimeric LpxA-like enzymes"/>
    <property type="match status" value="1"/>
</dbReference>
<dbReference type="PROSITE" id="PS00101">
    <property type="entry name" value="HEXAPEP_TRANSFERASES"/>
    <property type="match status" value="1"/>
</dbReference>
<sequence>MADPIFFKPSRELTIGDVADFTGASLRDPKLAPRSVERLASLKDAGEGALVFVEGKKNVSSLVGLKAAGVLCTESLADSVPSGIAVLVSRHPHRDFSAVGRMLFPASVRPESWLGETGISPAAFIHPTAQIEDGATVEAGAVIGSGVTIGAGTLIAATAVIGQNCQIGRNSYIAPGVSVQCAFIGNNVSLHPGVRIGQDGFGYVPGAAGLDKVPQLGRVIIQDNVEIGANTTVDRGSLDDTVIGEGTKIDNLVQIAHNVRIGRFCLVAAHCGISGSCVIGDQTMLGGRVGLADHLIIGSRVQVAAASGVMNDIPDGERWGGIPARPIKQWFRDIANIRSIGQSRKDASSDE</sequence>
<accession>Q2YRQ3</accession>
<accession>P0A3P6</accession>
<accession>Q44630</accession>
<accession>Q57CY6</accession>
<keyword id="KW-0012">Acyltransferase</keyword>
<keyword id="KW-0441">Lipid A biosynthesis</keyword>
<keyword id="KW-0444">Lipid biosynthesis</keyword>
<keyword id="KW-0443">Lipid metabolism</keyword>
<keyword id="KW-1185">Reference proteome</keyword>
<keyword id="KW-0677">Repeat</keyword>
<keyword id="KW-0808">Transferase</keyword>
<organism>
    <name type="scientific">Brucella abortus (strain 2308)</name>
    <dbReference type="NCBI Taxonomy" id="359391"/>
    <lineage>
        <taxon>Bacteria</taxon>
        <taxon>Pseudomonadati</taxon>
        <taxon>Pseudomonadota</taxon>
        <taxon>Alphaproteobacteria</taxon>
        <taxon>Hyphomicrobiales</taxon>
        <taxon>Brucellaceae</taxon>
        <taxon>Brucella/Ochrobactrum group</taxon>
        <taxon>Brucella</taxon>
    </lineage>
</organism>
<gene>
    <name evidence="1" type="primary">lpxD</name>
    <name type="ordered locus">BAB1_1175</name>
</gene>
<proteinExistence type="inferred from homology"/>